<protein>
    <recommendedName>
        <fullName evidence="1">Large ribosomal subunit protein uL22</fullName>
    </recommendedName>
    <alternativeName>
        <fullName evidence="2">50S ribosomal protein L22</fullName>
    </alternativeName>
</protein>
<evidence type="ECO:0000255" key="1">
    <source>
        <dbReference type="HAMAP-Rule" id="MF_01331"/>
    </source>
</evidence>
<evidence type="ECO:0000305" key="2"/>
<organism>
    <name type="scientific">Brucella melitensis biotype 1 (strain ATCC 23456 / CCUG 17765 / NCTC 10094 / 16M)</name>
    <dbReference type="NCBI Taxonomy" id="224914"/>
    <lineage>
        <taxon>Bacteria</taxon>
        <taxon>Pseudomonadati</taxon>
        <taxon>Pseudomonadota</taxon>
        <taxon>Alphaproteobacteria</taxon>
        <taxon>Hyphomicrobiales</taxon>
        <taxon>Brucellaceae</taxon>
        <taxon>Brucella/Ochrobactrum group</taxon>
        <taxon>Brucella</taxon>
    </lineage>
</organism>
<accession>Q8YHN5</accession>
<sequence length="129" mass="14143">MGKAKAPRQLKDNEAKAVARTLRVSPQKLNLVASMIRGKKVNAALADLTFSRKRIAGTVKKTLESAIANAENNHDLDVDALIVAEAYVGKSIVMKRFHVRDRGRASRIEKPFSHLTIVVREVAEKGKAA</sequence>
<dbReference type="EMBL" id="AE008917">
    <property type="protein sequence ID" value="AAL51943.1"/>
    <property type="molecule type" value="Genomic_DNA"/>
</dbReference>
<dbReference type="PIR" id="AD3347">
    <property type="entry name" value="AD3347"/>
</dbReference>
<dbReference type="RefSeq" id="WP_002964357.1">
    <property type="nucleotide sequence ID" value="NZ_GG703780.1"/>
</dbReference>
<dbReference type="SMR" id="Q8YHN5"/>
<dbReference type="GeneID" id="93016444"/>
<dbReference type="KEGG" id="bme:BMEI0762"/>
<dbReference type="KEGG" id="bmel:DK63_660"/>
<dbReference type="PATRIC" id="fig|224914.52.peg.691"/>
<dbReference type="eggNOG" id="COG0091">
    <property type="taxonomic scope" value="Bacteria"/>
</dbReference>
<dbReference type="PhylomeDB" id="Q8YHN5"/>
<dbReference type="Proteomes" id="UP000000419">
    <property type="component" value="Chromosome I"/>
</dbReference>
<dbReference type="GO" id="GO:0022625">
    <property type="term" value="C:cytosolic large ribosomal subunit"/>
    <property type="evidence" value="ECO:0007669"/>
    <property type="project" value="TreeGrafter"/>
</dbReference>
<dbReference type="GO" id="GO:0019843">
    <property type="term" value="F:rRNA binding"/>
    <property type="evidence" value="ECO:0007669"/>
    <property type="project" value="UniProtKB-UniRule"/>
</dbReference>
<dbReference type="GO" id="GO:0003735">
    <property type="term" value="F:structural constituent of ribosome"/>
    <property type="evidence" value="ECO:0007669"/>
    <property type="project" value="InterPro"/>
</dbReference>
<dbReference type="GO" id="GO:0006412">
    <property type="term" value="P:translation"/>
    <property type="evidence" value="ECO:0007669"/>
    <property type="project" value="UniProtKB-UniRule"/>
</dbReference>
<dbReference type="CDD" id="cd00336">
    <property type="entry name" value="Ribosomal_L22"/>
    <property type="match status" value="1"/>
</dbReference>
<dbReference type="Gene3D" id="3.90.470.10">
    <property type="entry name" value="Ribosomal protein L22/L17"/>
    <property type="match status" value="1"/>
</dbReference>
<dbReference type="HAMAP" id="MF_01331_B">
    <property type="entry name" value="Ribosomal_uL22_B"/>
    <property type="match status" value="1"/>
</dbReference>
<dbReference type="InterPro" id="IPR001063">
    <property type="entry name" value="Ribosomal_uL22"/>
</dbReference>
<dbReference type="InterPro" id="IPR005727">
    <property type="entry name" value="Ribosomal_uL22_bac/chlpt-type"/>
</dbReference>
<dbReference type="InterPro" id="IPR047867">
    <property type="entry name" value="Ribosomal_uL22_bac/org-type"/>
</dbReference>
<dbReference type="InterPro" id="IPR036394">
    <property type="entry name" value="Ribosomal_uL22_sf"/>
</dbReference>
<dbReference type="NCBIfam" id="TIGR01044">
    <property type="entry name" value="rplV_bact"/>
    <property type="match status" value="1"/>
</dbReference>
<dbReference type="PANTHER" id="PTHR13501">
    <property type="entry name" value="CHLOROPLAST 50S RIBOSOMAL PROTEIN L22-RELATED"/>
    <property type="match status" value="1"/>
</dbReference>
<dbReference type="PANTHER" id="PTHR13501:SF8">
    <property type="entry name" value="LARGE RIBOSOMAL SUBUNIT PROTEIN UL22M"/>
    <property type="match status" value="1"/>
</dbReference>
<dbReference type="Pfam" id="PF00237">
    <property type="entry name" value="Ribosomal_L22"/>
    <property type="match status" value="1"/>
</dbReference>
<dbReference type="SUPFAM" id="SSF54843">
    <property type="entry name" value="Ribosomal protein L22"/>
    <property type="match status" value="1"/>
</dbReference>
<comment type="function">
    <text evidence="1">This protein binds specifically to 23S rRNA; its binding is stimulated by other ribosomal proteins, e.g. L4, L17, and L20. It is important during the early stages of 50S assembly. It makes multiple contacts with different domains of the 23S rRNA in the assembled 50S subunit and ribosome (By similarity).</text>
</comment>
<comment type="function">
    <text evidence="1">The globular domain of the protein is located near the polypeptide exit tunnel on the outside of the subunit, while an extended beta-hairpin is found that lines the wall of the exit tunnel in the center of the 70S ribosome.</text>
</comment>
<comment type="subunit">
    <text evidence="1">Part of the 50S ribosomal subunit.</text>
</comment>
<comment type="similarity">
    <text evidence="1">Belongs to the universal ribosomal protein uL22 family.</text>
</comment>
<reference key="1">
    <citation type="journal article" date="2002" name="Proc. Natl. Acad. Sci. U.S.A.">
        <title>The genome sequence of the facultative intracellular pathogen Brucella melitensis.</title>
        <authorList>
            <person name="DelVecchio V.G."/>
            <person name="Kapatral V."/>
            <person name="Redkar R.J."/>
            <person name="Patra G."/>
            <person name="Mujer C."/>
            <person name="Los T."/>
            <person name="Ivanova N."/>
            <person name="Anderson I."/>
            <person name="Bhattacharyya A."/>
            <person name="Lykidis A."/>
            <person name="Reznik G."/>
            <person name="Jablonski L."/>
            <person name="Larsen N."/>
            <person name="D'Souza M."/>
            <person name="Bernal A."/>
            <person name="Mazur M."/>
            <person name="Goltsman E."/>
            <person name="Selkov E."/>
            <person name="Elzer P.H."/>
            <person name="Hagius S."/>
            <person name="O'Callaghan D."/>
            <person name="Letesson J.-J."/>
            <person name="Haselkorn R."/>
            <person name="Kyrpides N.C."/>
            <person name="Overbeek R."/>
        </authorList>
    </citation>
    <scope>NUCLEOTIDE SEQUENCE [LARGE SCALE GENOMIC DNA]</scope>
    <source>
        <strain>ATCC 23456 / CCUG 17765 / NCTC 10094 / 16M</strain>
    </source>
</reference>
<keyword id="KW-0687">Ribonucleoprotein</keyword>
<keyword id="KW-0689">Ribosomal protein</keyword>
<keyword id="KW-0694">RNA-binding</keyword>
<keyword id="KW-0699">rRNA-binding</keyword>
<proteinExistence type="inferred from homology"/>
<name>RL22_BRUME</name>
<feature type="chain" id="PRO_0000125128" description="Large ribosomal subunit protein uL22">
    <location>
        <begin position="1"/>
        <end position="129"/>
    </location>
</feature>
<gene>
    <name evidence="1" type="primary">rplV</name>
    <name type="ordered locus">BMEI0762</name>
</gene>